<gene>
    <name type="primary">dbp3</name>
    <name type="ORF">ACLA_068010</name>
</gene>
<organism>
    <name type="scientific">Aspergillus clavatus (strain ATCC 1007 / CBS 513.65 / DSM 816 / NCTC 3887 / NRRL 1 / QM 1276 / 107)</name>
    <dbReference type="NCBI Taxonomy" id="344612"/>
    <lineage>
        <taxon>Eukaryota</taxon>
        <taxon>Fungi</taxon>
        <taxon>Dikarya</taxon>
        <taxon>Ascomycota</taxon>
        <taxon>Pezizomycotina</taxon>
        <taxon>Eurotiomycetes</taxon>
        <taxon>Eurotiomycetidae</taxon>
        <taxon>Eurotiales</taxon>
        <taxon>Aspergillaceae</taxon>
        <taxon>Aspergillus</taxon>
        <taxon>Aspergillus subgen. Fumigati</taxon>
    </lineage>
</organism>
<dbReference type="EC" id="3.6.4.13"/>
<dbReference type="EMBL" id="DS027045">
    <property type="protein sequence ID" value="EAW13774.1"/>
    <property type="molecule type" value="Genomic_DNA"/>
</dbReference>
<dbReference type="RefSeq" id="XP_001275200.1">
    <property type="nucleotide sequence ID" value="XM_001275199.1"/>
</dbReference>
<dbReference type="SMR" id="A1C5V3"/>
<dbReference type="STRING" id="344612.A1C5V3"/>
<dbReference type="EnsemblFungi" id="EAW13774">
    <property type="protein sequence ID" value="EAW13774"/>
    <property type="gene ID" value="ACLA_068010"/>
</dbReference>
<dbReference type="GeneID" id="4708133"/>
<dbReference type="KEGG" id="act:ACLA_068010"/>
<dbReference type="VEuPathDB" id="FungiDB:ACLA_068010"/>
<dbReference type="eggNOG" id="KOG0331">
    <property type="taxonomic scope" value="Eukaryota"/>
</dbReference>
<dbReference type="HOGENOM" id="CLU_003041_1_5_1"/>
<dbReference type="OMA" id="KKTHDMY"/>
<dbReference type="OrthoDB" id="196131at2759"/>
<dbReference type="Proteomes" id="UP000006701">
    <property type="component" value="Unassembled WGS sequence"/>
</dbReference>
<dbReference type="GO" id="GO:0005730">
    <property type="term" value="C:nucleolus"/>
    <property type="evidence" value="ECO:0007669"/>
    <property type="project" value="UniProtKB-SubCell"/>
</dbReference>
<dbReference type="GO" id="GO:0030687">
    <property type="term" value="C:preribosome, large subunit precursor"/>
    <property type="evidence" value="ECO:0007669"/>
    <property type="project" value="EnsemblFungi"/>
</dbReference>
<dbReference type="GO" id="GO:0005524">
    <property type="term" value="F:ATP binding"/>
    <property type="evidence" value="ECO:0007669"/>
    <property type="project" value="UniProtKB-KW"/>
</dbReference>
<dbReference type="GO" id="GO:0016887">
    <property type="term" value="F:ATP hydrolysis activity"/>
    <property type="evidence" value="ECO:0007669"/>
    <property type="project" value="RHEA"/>
</dbReference>
<dbReference type="GO" id="GO:0003723">
    <property type="term" value="F:RNA binding"/>
    <property type="evidence" value="ECO:0007669"/>
    <property type="project" value="UniProtKB-KW"/>
</dbReference>
<dbReference type="GO" id="GO:0003724">
    <property type="term" value="F:RNA helicase activity"/>
    <property type="evidence" value="ECO:0007669"/>
    <property type="project" value="UniProtKB-EC"/>
</dbReference>
<dbReference type="GO" id="GO:0000464">
    <property type="term" value="P:endonucleolytic cleavage in ITS1 upstream of 5.8S rRNA from tricistronic rRNA transcript (SSU-rRNA, 5.8S rRNA, LSU-rRNA)"/>
    <property type="evidence" value="ECO:0007669"/>
    <property type="project" value="EnsemblFungi"/>
</dbReference>
<dbReference type="CDD" id="cd00268">
    <property type="entry name" value="DEADc"/>
    <property type="match status" value="1"/>
</dbReference>
<dbReference type="CDD" id="cd18787">
    <property type="entry name" value="SF2_C_DEAD"/>
    <property type="match status" value="1"/>
</dbReference>
<dbReference type="FunFam" id="3.40.50.300:FF:000008">
    <property type="entry name" value="ATP-dependent RNA helicase RhlB"/>
    <property type="match status" value="1"/>
</dbReference>
<dbReference type="Gene3D" id="3.40.50.300">
    <property type="entry name" value="P-loop containing nucleotide triphosphate hydrolases"/>
    <property type="match status" value="2"/>
</dbReference>
<dbReference type="InterPro" id="IPR011545">
    <property type="entry name" value="DEAD/DEAH_box_helicase_dom"/>
</dbReference>
<dbReference type="InterPro" id="IPR014001">
    <property type="entry name" value="Helicase_ATP-bd"/>
</dbReference>
<dbReference type="InterPro" id="IPR001650">
    <property type="entry name" value="Helicase_C-like"/>
</dbReference>
<dbReference type="InterPro" id="IPR027417">
    <property type="entry name" value="P-loop_NTPase"/>
</dbReference>
<dbReference type="InterPro" id="IPR000629">
    <property type="entry name" value="RNA-helicase_DEAD-box_CS"/>
</dbReference>
<dbReference type="PANTHER" id="PTHR47958">
    <property type="entry name" value="ATP-DEPENDENT RNA HELICASE DBP3"/>
    <property type="match status" value="1"/>
</dbReference>
<dbReference type="Pfam" id="PF00270">
    <property type="entry name" value="DEAD"/>
    <property type="match status" value="1"/>
</dbReference>
<dbReference type="Pfam" id="PF00271">
    <property type="entry name" value="Helicase_C"/>
    <property type="match status" value="1"/>
</dbReference>
<dbReference type="SMART" id="SM00487">
    <property type="entry name" value="DEXDc"/>
    <property type="match status" value="1"/>
</dbReference>
<dbReference type="SMART" id="SM00490">
    <property type="entry name" value="HELICc"/>
    <property type="match status" value="1"/>
</dbReference>
<dbReference type="SUPFAM" id="SSF52540">
    <property type="entry name" value="P-loop containing nucleoside triphosphate hydrolases"/>
    <property type="match status" value="1"/>
</dbReference>
<dbReference type="PROSITE" id="PS00039">
    <property type="entry name" value="DEAD_ATP_HELICASE"/>
    <property type="match status" value="1"/>
</dbReference>
<dbReference type="PROSITE" id="PS51192">
    <property type="entry name" value="HELICASE_ATP_BIND_1"/>
    <property type="match status" value="1"/>
</dbReference>
<dbReference type="PROSITE" id="PS51194">
    <property type="entry name" value="HELICASE_CTER"/>
    <property type="match status" value="1"/>
</dbReference>
<accession>A1C5V3</accession>
<protein>
    <recommendedName>
        <fullName>ATP-dependent RNA helicase dbp3</fullName>
        <ecNumber>3.6.4.13</ecNumber>
    </recommendedName>
</protein>
<comment type="function">
    <text evidence="1">ATP-dependent RNA helicase required for 60S ribosomal subunit synthesis. Involved in efficient pre-rRNA processing, predominantly at site A3, which is necessary for the normal formation of 25S and 5.8S rRNAs (By similarity).</text>
</comment>
<comment type="catalytic activity">
    <reaction>
        <text>ATP + H2O = ADP + phosphate + H(+)</text>
        <dbReference type="Rhea" id="RHEA:13065"/>
        <dbReference type="ChEBI" id="CHEBI:15377"/>
        <dbReference type="ChEBI" id="CHEBI:15378"/>
        <dbReference type="ChEBI" id="CHEBI:30616"/>
        <dbReference type="ChEBI" id="CHEBI:43474"/>
        <dbReference type="ChEBI" id="CHEBI:456216"/>
        <dbReference type="EC" id="3.6.4.13"/>
    </reaction>
</comment>
<comment type="subcellular location">
    <subcellularLocation>
        <location evidence="1">Nucleus</location>
        <location evidence="1">Nucleolus</location>
    </subcellularLocation>
</comment>
<comment type="domain">
    <text>The Q motif is unique to and characteristic of the DEAD box family of RNA helicases and controls ATP binding and hydrolysis.</text>
</comment>
<comment type="similarity">
    <text evidence="5">Belongs to the DEAD box helicase family. DDX5/DBP2 subfamily.</text>
</comment>
<proteinExistence type="inferred from homology"/>
<reference key="1">
    <citation type="journal article" date="2008" name="PLoS Genet.">
        <title>Genomic islands in the pathogenic filamentous fungus Aspergillus fumigatus.</title>
        <authorList>
            <person name="Fedorova N.D."/>
            <person name="Khaldi N."/>
            <person name="Joardar V.S."/>
            <person name="Maiti R."/>
            <person name="Amedeo P."/>
            <person name="Anderson M.J."/>
            <person name="Crabtree J."/>
            <person name="Silva J.C."/>
            <person name="Badger J.H."/>
            <person name="Albarraq A."/>
            <person name="Angiuoli S."/>
            <person name="Bussey H."/>
            <person name="Bowyer P."/>
            <person name="Cotty P.J."/>
            <person name="Dyer P.S."/>
            <person name="Egan A."/>
            <person name="Galens K."/>
            <person name="Fraser-Liggett C.M."/>
            <person name="Haas B.J."/>
            <person name="Inman J.M."/>
            <person name="Kent R."/>
            <person name="Lemieux S."/>
            <person name="Malavazi I."/>
            <person name="Orvis J."/>
            <person name="Roemer T."/>
            <person name="Ronning C.M."/>
            <person name="Sundaram J.P."/>
            <person name="Sutton G."/>
            <person name="Turner G."/>
            <person name="Venter J.C."/>
            <person name="White O.R."/>
            <person name="Whitty B.R."/>
            <person name="Youngman P."/>
            <person name="Wolfe K.H."/>
            <person name="Goldman G.H."/>
            <person name="Wortman J.R."/>
            <person name="Jiang B."/>
            <person name="Denning D.W."/>
            <person name="Nierman W.C."/>
        </authorList>
    </citation>
    <scope>NUCLEOTIDE SEQUENCE [LARGE SCALE GENOMIC DNA]</scope>
    <source>
        <strain>ATCC 1007 / CBS 513.65 / DSM 816 / NCTC 3887 / NRRL 1 / QM 1276 / 107</strain>
    </source>
</reference>
<evidence type="ECO:0000250" key="1"/>
<evidence type="ECO:0000255" key="2">
    <source>
        <dbReference type="PROSITE-ProRule" id="PRU00541"/>
    </source>
</evidence>
<evidence type="ECO:0000255" key="3">
    <source>
        <dbReference type="PROSITE-ProRule" id="PRU00542"/>
    </source>
</evidence>
<evidence type="ECO:0000256" key="4">
    <source>
        <dbReference type="SAM" id="MobiDB-lite"/>
    </source>
</evidence>
<evidence type="ECO:0000305" key="5"/>
<keyword id="KW-0067">ATP-binding</keyword>
<keyword id="KW-0347">Helicase</keyword>
<keyword id="KW-0378">Hydrolase</keyword>
<keyword id="KW-0547">Nucleotide-binding</keyword>
<keyword id="KW-0539">Nucleus</keyword>
<keyword id="KW-1185">Reference proteome</keyword>
<keyword id="KW-0690">Ribosome biogenesis</keyword>
<keyword id="KW-0694">RNA-binding</keyword>
<keyword id="KW-0698">rRNA processing</keyword>
<feature type="chain" id="PRO_0000281695" description="ATP-dependent RNA helicase dbp3">
    <location>
        <begin position="1"/>
        <end position="503"/>
    </location>
</feature>
<feature type="domain" description="Helicase ATP-binding" evidence="2">
    <location>
        <begin position="116"/>
        <end position="292"/>
    </location>
</feature>
<feature type="domain" description="Helicase C-terminal" evidence="3">
    <location>
        <begin position="323"/>
        <end position="472"/>
    </location>
</feature>
<feature type="region of interest" description="Disordered" evidence="4">
    <location>
        <begin position="1"/>
        <end position="37"/>
    </location>
</feature>
<feature type="short sequence motif" description="Q motif">
    <location>
        <begin position="104"/>
        <end position="112"/>
    </location>
</feature>
<feature type="short sequence motif" description="DEAD box">
    <location>
        <begin position="239"/>
        <end position="242"/>
    </location>
</feature>
<feature type="compositionally biased region" description="Basic and acidic residues" evidence="4">
    <location>
        <begin position="1"/>
        <end position="13"/>
    </location>
</feature>
<feature type="binding site" evidence="2">
    <location>
        <begin position="129"/>
        <end position="136"/>
    </location>
    <ligand>
        <name>ATP</name>
        <dbReference type="ChEBI" id="CHEBI:30616"/>
    </ligand>
</feature>
<sequence>MGKRVSHNEGADRRPKKKAKNEKPEKETMESPAADVTVDFGSKSDATYVQSQVLSDMPQSEIDQFLATHSIKVTDTSDAPAVRPIISFSHLPSCDSKLYSSLSSFASPTPIQSATWPLLFAGRDVIGIAETGSGKTLAFGLPCLKKILDSGKIKFKNARPAAVIISPTRELAMQIYDQISKYAGSIGIKATCIFGGVKKDEQREALKSAAIVVATPGRLKDLQNDGSVDLGKVKYLVLDEADRMLDKGFEQDIKDIISSTPDSKRQTVMFTATWPPSVRDLAATFMTSAVTVTIGGDPSADPRANTRIKQTVEVVQSHDKEYRLVQLLSENQRGAAALDKVLVFCLYKKEAMRVERLLRNKNFKVAGIHGDLNQHERFKSLDAFKSGAATVLVATDVAARGLDIPSVKLVINVTFPLTVEDYVHRIGRTGRAGAEGRAITLFTETDKAQSGALINVLKAAKQEVPQELLKFGTTVKKKQHGAYGAFFKEADSGKSATKIVFDD</sequence>
<name>DBP3_ASPCL</name>